<dbReference type="EC" id="7.2.4.3" evidence="4"/>
<dbReference type="EMBL" id="AJ002015">
    <property type="protein sequence ID" value="CAA05137.1"/>
    <property type="molecule type" value="Genomic_DNA"/>
</dbReference>
<dbReference type="PIR" id="T44982">
    <property type="entry name" value="T44982"/>
</dbReference>
<dbReference type="SMR" id="O54028"/>
<dbReference type="KEGG" id="ag:CAA05137"/>
<dbReference type="GO" id="GO:0005886">
    <property type="term" value="C:plasma membrane"/>
    <property type="evidence" value="ECO:0007669"/>
    <property type="project" value="UniProtKB-SubCell"/>
</dbReference>
<dbReference type="GO" id="GO:0004658">
    <property type="term" value="F:propionyl-CoA carboxylase activity"/>
    <property type="evidence" value="ECO:0007669"/>
    <property type="project" value="TreeGrafter"/>
</dbReference>
<dbReference type="GO" id="GO:0006814">
    <property type="term" value="P:sodium ion transport"/>
    <property type="evidence" value="ECO:0007669"/>
    <property type="project" value="UniProtKB-KW"/>
</dbReference>
<dbReference type="FunFam" id="3.90.226.10:FF:000017">
    <property type="entry name" value="Propionyl-CoA carboxylase subunit beta 5"/>
    <property type="match status" value="1"/>
</dbReference>
<dbReference type="FunFam" id="3.90.226.10:FF:000016">
    <property type="entry name" value="Propionyl-CoA carboxylase, beta subunit"/>
    <property type="match status" value="1"/>
</dbReference>
<dbReference type="Gene3D" id="3.90.226.10">
    <property type="entry name" value="2-enoyl-CoA Hydratase, Chain A, domain 1"/>
    <property type="match status" value="2"/>
</dbReference>
<dbReference type="InterPro" id="IPR051047">
    <property type="entry name" value="AccD/PCCB"/>
</dbReference>
<dbReference type="InterPro" id="IPR034733">
    <property type="entry name" value="AcCoA_carboxyl_beta"/>
</dbReference>
<dbReference type="InterPro" id="IPR029045">
    <property type="entry name" value="ClpP/crotonase-like_dom_sf"/>
</dbReference>
<dbReference type="InterPro" id="IPR011763">
    <property type="entry name" value="COA_CT_C"/>
</dbReference>
<dbReference type="InterPro" id="IPR011762">
    <property type="entry name" value="COA_CT_N"/>
</dbReference>
<dbReference type="InterPro" id="IPR005783">
    <property type="entry name" value="MemalonylCoA_decase_suA"/>
</dbReference>
<dbReference type="NCBIfam" id="TIGR01117">
    <property type="entry name" value="mmdA"/>
    <property type="match status" value="1"/>
</dbReference>
<dbReference type="PANTHER" id="PTHR43842">
    <property type="entry name" value="PROPIONYL-COA CARBOXYLASE BETA CHAIN"/>
    <property type="match status" value="1"/>
</dbReference>
<dbReference type="PANTHER" id="PTHR43842:SF2">
    <property type="entry name" value="PROPIONYL-COA CARBOXYLASE BETA CHAIN, MITOCHONDRIAL"/>
    <property type="match status" value="1"/>
</dbReference>
<dbReference type="Pfam" id="PF01039">
    <property type="entry name" value="Carboxyl_trans"/>
    <property type="match status" value="1"/>
</dbReference>
<dbReference type="SUPFAM" id="SSF52096">
    <property type="entry name" value="ClpP/crotonase"/>
    <property type="match status" value="2"/>
</dbReference>
<dbReference type="PROSITE" id="PS50989">
    <property type="entry name" value="COA_CT_CTER"/>
    <property type="match status" value="1"/>
</dbReference>
<dbReference type="PROSITE" id="PS50980">
    <property type="entry name" value="COA_CT_NTER"/>
    <property type="match status" value="1"/>
</dbReference>
<gene>
    <name evidence="5" type="primary">mmdA</name>
</gene>
<protein>
    <recommendedName>
        <fullName evidence="6">Methylmalonyl-CoA decarboxylase subunit alpha</fullName>
        <ecNumber evidence="4">7.2.4.3</ecNumber>
    </recommendedName>
</protein>
<reference key="1">
    <citation type="journal article" date="1997" name="Eur. J. Biochem.">
        <title>Methylmalonyl-CoA decarboxylase from Propionigenium modestum--cloning and sequencing of the structural genes and purification of the enzyme complex.</title>
        <authorList>
            <person name="Bott M."/>
            <person name="Pfister K."/>
            <person name="Burda P."/>
            <person name="Kalbermatter O."/>
            <person name="Woehlke G."/>
            <person name="Dimroth P."/>
        </authorList>
    </citation>
    <scope>PROTEIN SEQUENCE OF 1-31</scope>
    <scope>NUCLEOTIDE SEQUENCE [GENOMIC DNA] OF 5-516</scope>
    <scope>FUNCTION</scope>
    <scope>CATALYTIC ACTIVITY</scope>
    <scope>SUBUNIT</scope>
    <scope>SUBCELLULAR LOCATION</scope>
    <source>
        <strain>DSM 2376 / Gra Succ2</strain>
    </source>
</reference>
<sequence>MSVAAKKIQDLQKKKEKIALGGGIKRIEKQHASGKMTARERLAYLFDEGTFVEMDAFVQHRCTNFGMDKQDLPSESVVTGYGMVDGRVVYAFSQDFTVTGGALGEMHAKKICKAMDMAGKVGAPVVGLNDSGGARIQEAVDALSGYGDIFYRNSIYSGVVPQISAILGPCAGGAVYSPALTDFIFMVDQTSQMFITGPQVIKTVTGEEVTAEQLGGAMTHNSTSGCAQFISQDDKACIDDIRRLISFLPSNNMEKAPEFGCEDDLNIQFPELDALMPDNPNKAYNMFDVITKIVDNGDYMEYQPHYSKNIITCFARVNGKSVGIIANQPQVMAGCLDIDSGDKCAKFIRTCDAFNIPLLTIVDVPGFLPGVTQEYGGIIRHGAKILYAYSEATVPKVTLITRKAYGGAYVAMCSKSLGADVVLAWPTAEIAVMGPAGAVNIIFRKDIKDAKDPAATTKQKLDEYTTEFANPYQAARRGLVDDVIEPKTSRQRIVDAFNMLEGKREKLPAKKHGNIPL</sequence>
<keyword id="KW-1003">Cell membrane</keyword>
<keyword id="KW-0903">Direct protein sequencing</keyword>
<keyword id="KW-0406">Ion transport</keyword>
<keyword id="KW-0472">Membrane</keyword>
<keyword id="KW-0915">Sodium</keyword>
<keyword id="KW-0739">Sodium transport</keyword>
<keyword id="KW-1278">Translocase</keyword>
<keyword id="KW-0813">Transport</keyword>
<organism>
    <name type="scientific">Propionigenium modestum</name>
    <dbReference type="NCBI Taxonomy" id="2333"/>
    <lineage>
        <taxon>Bacteria</taxon>
        <taxon>Fusobacteriati</taxon>
        <taxon>Fusobacteriota</taxon>
        <taxon>Fusobacteriia</taxon>
        <taxon>Fusobacteriales</taxon>
        <taxon>Fusobacteriaceae</taxon>
        <taxon>Propionigenium</taxon>
    </lineage>
</organism>
<name>MMDA_PROMO</name>
<evidence type="ECO:0000250" key="1">
    <source>
        <dbReference type="UniProtKB" id="Q57079"/>
    </source>
</evidence>
<evidence type="ECO:0000255" key="2">
    <source>
        <dbReference type="PROSITE-ProRule" id="PRU01136"/>
    </source>
</evidence>
<evidence type="ECO:0000255" key="3">
    <source>
        <dbReference type="PROSITE-ProRule" id="PRU01137"/>
    </source>
</evidence>
<evidence type="ECO:0000269" key="4">
    <source>
    </source>
</evidence>
<evidence type="ECO:0000303" key="5">
    <source>
    </source>
</evidence>
<evidence type="ECO:0000305" key="6"/>
<proteinExistence type="evidence at protein level"/>
<accession>O54028</accession>
<comment type="function">
    <text evidence="1 4">Carboxyltransferase subunit of the sodium ion pump methylmalonyl-CoA decarboxylase, which converts the chemical energy of a decarboxylation reaction into an electrochemical gradient of Na(+) ions across the cytoplasmic membrane, thereby creating a sodium ion motive force that is used for ATP synthesis (PubMed:9428714). The alpha subunit catalyzes the Na(+)-independent carboxyltransfer from methylmalonyl-CoA to the prosthetic biotin group located on the gamma subunit (By similarity).</text>
</comment>
<comment type="catalytic activity">
    <reaction evidence="4">
        <text>(S)-methylmalonyl-CoA + Na(+)(in) + H(+)(out) = propanoyl-CoA + Na(+)(out) + CO2</text>
        <dbReference type="Rhea" id="RHEA:21396"/>
        <dbReference type="ChEBI" id="CHEBI:15378"/>
        <dbReference type="ChEBI" id="CHEBI:16526"/>
        <dbReference type="ChEBI" id="CHEBI:29101"/>
        <dbReference type="ChEBI" id="CHEBI:57327"/>
        <dbReference type="ChEBI" id="CHEBI:57392"/>
        <dbReference type="EC" id="7.2.4.3"/>
    </reaction>
</comment>
<comment type="subunit">
    <text evidence="4">The methylmalonyl-CoA decarboxylase is composed of four subunits: the carboxyltransferase alpha subunit (MmdA), the tunnel beta subunit (MmdB), the biotin-containing gamma subunit (MmdC) and the delta subunit (MmdD).</text>
</comment>
<comment type="subcellular location">
    <subcellularLocation>
        <location evidence="4">Cell membrane</location>
    </subcellularLocation>
</comment>
<comment type="similarity">
    <text evidence="6">Belongs to the AccD/PCCB family.</text>
</comment>
<feature type="initiator methionine" description="Removed" evidence="4">
    <location>
        <position position="1"/>
    </location>
</feature>
<feature type="chain" id="PRO_0000453532" description="Methylmalonyl-CoA decarboxylase subunit alpha">
    <location>
        <begin position="2"/>
        <end position="517"/>
    </location>
</feature>
<feature type="domain" description="CoA carboxyltransferase N-terminal" evidence="2">
    <location>
        <begin position="4"/>
        <end position="260"/>
    </location>
</feature>
<feature type="domain" description="CoA carboxyltransferase C-terminal" evidence="3">
    <location>
        <begin position="271"/>
        <end position="513"/>
    </location>
</feature>